<name>DNAE2_COREF</name>
<keyword id="KW-0963">Cytoplasm</keyword>
<keyword id="KW-0227">DNA damage</keyword>
<keyword id="KW-0234">DNA repair</keyword>
<keyword id="KW-0235">DNA replication</keyword>
<keyword id="KW-0239">DNA-directed DNA polymerase</keyword>
<keyword id="KW-0548">Nucleotidyltransferase</keyword>
<keyword id="KW-1185">Reference proteome</keyword>
<keyword id="KW-0808">Transferase</keyword>
<gene>
    <name evidence="1" type="primary">dnaE2</name>
    <name type="ordered locus">CE0632</name>
</gene>
<dbReference type="EC" id="2.7.7.7" evidence="1"/>
<dbReference type="EMBL" id="BA000035">
    <property type="protein sequence ID" value="BAC17442.1"/>
    <property type="molecule type" value="Genomic_DNA"/>
</dbReference>
<dbReference type="SMR" id="Q8FRX6"/>
<dbReference type="STRING" id="196164.gene:10741034"/>
<dbReference type="KEGG" id="cef:CE0632"/>
<dbReference type="eggNOG" id="COG0587">
    <property type="taxonomic scope" value="Bacteria"/>
</dbReference>
<dbReference type="HOGENOM" id="CLU_001600_4_0_11"/>
<dbReference type="Proteomes" id="UP000001409">
    <property type="component" value="Chromosome"/>
</dbReference>
<dbReference type="GO" id="GO:0005737">
    <property type="term" value="C:cytoplasm"/>
    <property type="evidence" value="ECO:0007669"/>
    <property type="project" value="UniProtKB-SubCell"/>
</dbReference>
<dbReference type="GO" id="GO:0008408">
    <property type="term" value="F:3'-5' exonuclease activity"/>
    <property type="evidence" value="ECO:0007669"/>
    <property type="project" value="InterPro"/>
</dbReference>
<dbReference type="GO" id="GO:0003887">
    <property type="term" value="F:DNA-directed DNA polymerase activity"/>
    <property type="evidence" value="ECO:0007669"/>
    <property type="project" value="UniProtKB-UniRule"/>
</dbReference>
<dbReference type="GO" id="GO:0003676">
    <property type="term" value="F:nucleic acid binding"/>
    <property type="evidence" value="ECO:0007669"/>
    <property type="project" value="InterPro"/>
</dbReference>
<dbReference type="GO" id="GO:0006281">
    <property type="term" value="P:DNA repair"/>
    <property type="evidence" value="ECO:0007669"/>
    <property type="project" value="UniProtKB-UniRule"/>
</dbReference>
<dbReference type="GO" id="GO:0006260">
    <property type="term" value="P:DNA replication"/>
    <property type="evidence" value="ECO:0007669"/>
    <property type="project" value="UniProtKB-KW"/>
</dbReference>
<dbReference type="CDD" id="cd04485">
    <property type="entry name" value="DnaE_OBF"/>
    <property type="match status" value="1"/>
</dbReference>
<dbReference type="CDD" id="cd07431">
    <property type="entry name" value="PHP_PolIIIA"/>
    <property type="match status" value="1"/>
</dbReference>
<dbReference type="Gene3D" id="1.10.150.870">
    <property type="match status" value="1"/>
</dbReference>
<dbReference type="Gene3D" id="3.20.20.140">
    <property type="entry name" value="Metal-dependent hydrolases"/>
    <property type="match status" value="1"/>
</dbReference>
<dbReference type="HAMAP" id="MF_01902">
    <property type="entry name" value="DNApol_error_prone"/>
    <property type="match status" value="1"/>
</dbReference>
<dbReference type="InterPro" id="IPR011708">
    <property type="entry name" value="DNA_pol3_alpha_NTPase_dom"/>
</dbReference>
<dbReference type="InterPro" id="IPR040982">
    <property type="entry name" value="DNA_pol3_finger"/>
</dbReference>
<dbReference type="InterPro" id="IPR023073">
    <property type="entry name" value="DnaE2"/>
</dbReference>
<dbReference type="InterPro" id="IPR004805">
    <property type="entry name" value="DnaE2/DnaE/PolC"/>
</dbReference>
<dbReference type="InterPro" id="IPR029460">
    <property type="entry name" value="DNAPol_HHH"/>
</dbReference>
<dbReference type="InterPro" id="IPR004365">
    <property type="entry name" value="NA-bd_OB_tRNA"/>
</dbReference>
<dbReference type="InterPro" id="IPR004013">
    <property type="entry name" value="PHP_dom"/>
</dbReference>
<dbReference type="InterPro" id="IPR003141">
    <property type="entry name" value="Pol/His_phosphatase_N"/>
</dbReference>
<dbReference type="InterPro" id="IPR016195">
    <property type="entry name" value="Pol/histidinol_Pase-like"/>
</dbReference>
<dbReference type="NCBIfam" id="NF004225">
    <property type="entry name" value="PRK05672.1"/>
    <property type="match status" value="1"/>
</dbReference>
<dbReference type="PANTHER" id="PTHR32294">
    <property type="entry name" value="DNA POLYMERASE III SUBUNIT ALPHA"/>
    <property type="match status" value="1"/>
</dbReference>
<dbReference type="PANTHER" id="PTHR32294:SF4">
    <property type="entry name" value="ERROR-PRONE DNA POLYMERASE"/>
    <property type="match status" value="1"/>
</dbReference>
<dbReference type="Pfam" id="PF07733">
    <property type="entry name" value="DNA_pol3_alpha"/>
    <property type="match status" value="1"/>
</dbReference>
<dbReference type="Pfam" id="PF17657">
    <property type="entry name" value="DNA_pol3_finger"/>
    <property type="match status" value="1"/>
</dbReference>
<dbReference type="Pfam" id="PF14579">
    <property type="entry name" value="HHH_6"/>
    <property type="match status" value="1"/>
</dbReference>
<dbReference type="Pfam" id="PF02811">
    <property type="entry name" value="PHP"/>
    <property type="match status" value="1"/>
</dbReference>
<dbReference type="Pfam" id="PF01336">
    <property type="entry name" value="tRNA_anti-codon"/>
    <property type="match status" value="1"/>
</dbReference>
<dbReference type="SMART" id="SM00481">
    <property type="entry name" value="POLIIIAc"/>
    <property type="match status" value="1"/>
</dbReference>
<dbReference type="SUPFAM" id="SSF89550">
    <property type="entry name" value="PHP domain-like"/>
    <property type="match status" value="1"/>
</dbReference>
<comment type="function">
    <text evidence="1">DNA polymerase involved in damage-induced mutagenesis and translesion synthesis (TLS). It is not the major replicative DNA polymerase.</text>
</comment>
<comment type="catalytic activity">
    <reaction evidence="1">
        <text>DNA(n) + a 2'-deoxyribonucleoside 5'-triphosphate = DNA(n+1) + diphosphate</text>
        <dbReference type="Rhea" id="RHEA:22508"/>
        <dbReference type="Rhea" id="RHEA-COMP:17339"/>
        <dbReference type="Rhea" id="RHEA-COMP:17340"/>
        <dbReference type="ChEBI" id="CHEBI:33019"/>
        <dbReference type="ChEBI" id="CHEBI:61560"/>
        <dbReference type="ChEBI" id="CHEBI:173112"/>
        <dbReference type="EC" id="2.7.7.7"/>
    </reaction>
</comment>
<comment type="subcellular location">
    <subcellularLocation>
        <location evidence="1">Cytoplasm</location>
    </subcellularLocation>
</comment>
<comment type="similarity">
    <text evidence="1">Belongs to the DNA polymerase type-C family. DnaE2 subfamily.</text>
</comment>
<proteinExistence type="inferred from homology"/>
<organism>
    <name type="scientific">Corynebacterium efficiens (strain DSM 44549 / YS-314 / AJ 12310 / JCM 11189 / NBRC 100395)</name>
    <dbReference type="NCBI Taxonomy" id="196164"/>
    <lineage>
        <taxon>Bacteria</taxon>
        <taxon>Bacillati</taxon>
        <taxon>Actinomycetota</taxon>
        <taxon>Actinomycetes</taxon>
        <taxon>Mycobacteriales</taxon>
        <taxon>Corynebacteriaceae</taxon>
        <taxon>Corynebacterium</taxon>
    </lineage>
</organism>
<protein>
    <recommendedName>
        <fullName evidence="1">Error-prone DNA polymerase</fullName>
        <ecNumber evidence="1">2.7.7.7</ecNumber>
    </recommendedName>
</protein>
<reference key="1">
    <citation type="journal article" date="2003" name="Genome Res.">
        <title>Comparative complete genome sequence analysis of the amino acid replacements responsible for the thermostability of Corynebacterium efficiens.</title>
        <authorList>
            <person name="Nishio Y."/>
            <person name="Nakamura Y."/>
            <person name="Kawarabayasi Y."/>
            <person name="Usuda Y."/>
            <person name="Kimura E."/>
            <person name="Sugimoto S."/>
            <person name="Matsui K."/>
            <person name="Yamagishi A."/>
            <person name="Kikuchi H."/>
            <person name="Ikeo K."/>
            <person name="Gojobori T."/>
        </authorList>
    </citation>
    <scope>NUCLEOTIDE SEQUENCE [LARGE SCALE GENOMIC DNA]</scope>
    <source>
        <strain>DSM 44549 / YS-314 / AJ 12310 / JCM 11189 / NBRC 100395</strain>
    </source>
</reference>
<evidence type="ECO:0000255" key="1">
    <source>
        <dbReference type="HAMAP-Rule" id="MF_01902"/>
    </source>
</evidence>
<evidence type="ECO:0000256" key="2">
    <source>
        <dbReference type="SAM" id="MobiDB-lite"/>
    </source>
</evidence>
<feature type="chain" id="PRO_0000103377" description="Error-prone DNA polymerase">
    <location>
        <begin position="1"/>
        <end position="1073"/>
    </location>
</feature>
<feature type="region of interest" description="Disordered" evidence="2">
    <location>
        <begin position="41"/>
        <end position="73"/>
    </location>
</feature>
<feature type="compositionally biased region" description="Basic and acidic residues" evidence="2">
    <location>
        <begin position="60"/>
        <end position="73"/>
    </location>
</feature>
<sequence length="1073" mass="116229">MVGMEWDTGARGLTGRPLPWSMVEGILSGREVGTPRPVLHEAEPECLSTPRPGPGSTEVPGERRGSRQGERSGEIPFVELHATSSYNFLAGASDPGEMVDRAHELGLSALALVDRDGLYGAVRFAEAAAEVGLATVFGAELSLREGVLTVLCRGVEGYRRLSHLITGAAMSAGEKGSVDYPLLPQVAEQGAGHWVVLAGVEWQKKIDHLIECFGRDNVVLEFPARMLPEDTDHHDILRSIQTRTGLRGILSTMPTAATRDHVRLAGAKCALALRANLAEAESSLHPMGGTWLRSGGALARAYPQCGDLLATTVEIASGCAFTFDLVAPELPRWDTPDGHTEMTWLTHLVESRFDRRYRSRPAEVRERARAQIRHELGVIEQLGFPGYFLIVDDLVQFCHNATILCQGRGSAANSAVCFVLGITNAEPITAGLLFERFLSRDRDGPPDIDIDIESGRREEVIQYVYTRYGRDNAAQVANVITYRTKGALRDAARALGYPQGTVDAWSRGASEPPADVVELAGQLKGQPRHLGIHSGGMVICDRPIADVVPTEWARMEGRSVVQWDKDDCAAAGLVKFDLLGLGMLEALHHMMDLVAHHRGITVNLWELDLADAGVYDMLCRADAVGVFQVESRAQMSTLPRLKPRTFFDLVVEVALIRPGPIQGGSVHPYLRRRSGEEAVTYDHPVLEKSLGKTLGIPLFQEQIMQIAVDAAGFTGGEADALRRAMGSKRSPTRMAALRSRFYQGLADTHGIIGDTADKLWNKMVAFAAYGFPESHSQSFATLVYFSAWFKHHYPAEFCAGLLRAQPMGFYSPQSLIADARRHGVEILPISINESGVQADAPDGHLRLGLDLVKGLGEEAARRIAEHAPYTSIPDLSRRADLGVAHIEALARAGALDCLGVGRREALWQAGIAATERPGMLPGISAIEAPALPGMSAFELMATSIAATGVTHDAQPMALLRAHLDALGVVPADRLLTDVADGTRVRIAGVVTHRQRPQTASGVTFLGLEDETGLMNVMVSPGLWDRQRVLARTAKTLIIRGIVQNATGAVNVVADKLEPLPVGEWLSRGSRDFR</sequence>
<accession>Q8FRX6</accession>